<name>PRIL_THEAC</name>
<accession>Q9HJD1</accession>
<dbReference type="EMBL" id="AL445066">
    <property type="protein sequence ID" value="CAC12167.1"/>
    <property type="molecule type" value="Genomic_DNA"/>
</dbReference>
<dbReference type="RefSeq" id="WP_010901449.1">
    <property type="nucleotide sequence ID" value="NC_002578.1"/>
</dbReference>
<dbReference type="SMR" id="Q9HJD1"/>
<dbReference type="STRING" id="273075.gene:9572259"/>
<dbReference type="PaxDb" id="273075-Ta1038"/>
<dbReference type="DNASU" id="1456559"/>
<dbReference type="EnsemblBacteria" id="CAC12167">
    <property type="protein sequence ID" value="CAC12167"/>
    <property type="gene ID" value="CAC12167"/>
</dbReference>
<dbReference type="KEGG" id="tac:Ta1038"/>
<dbReference type="eggNOG" id="arCOG03013">
    <property type="taxonomic scope" value="Archaea"/>
</dbReference>
<dbReference type="HOGENOM" id="CLU_052778_0_0_2"/>
<dbReference type="InParanoid" id="Q9HJD1"/>
<dbReference type="OrthoDB" id="46081at2157"/>
<dbReference type="Proteomes" id="UP000001024">
    <property type="component" value="Chromosome"/>
</dbReference>
<dbReference type="GO" id="GO:1990077">
    <property type="term" value="C:primosome complex"/>
    <property type="evidence" value="ECO:0007669"/>
    <property type="project" value="UniProtKB-KW"/>
</dbReference>
<dbReference type="GO" id="GO:0051539">
    <property type="term" value="F:4 iron, 4 sulfur cluster binding"/>
    <property type="evidence" value="ECO:0007669"/>
    <property type="project" value="UniProtKB-UniRule"/>
</dbReference>
<dbReference type="GO" id="GO:0003899">
    <property type="term" value="F:DNA-directed RNA polymerase activity"/>
    <property type="evidence" value="ECO:0007669"/>
    <property type="project" value="InterPro"/>
</dbReference>
<dbReference type="GO" id="GO:0046872">
    <property type="term" value="F:metal ion binding"/>
    <property type="evidence" value="ECO:0007669"/>
    <property type="project" value="UniProtKB-KW"/>
</dbReference>
<dbReference type="GO" id="GO:0006270">
    <property type="term" value="P:DNA replication initiation"/>
    <property type="evidence" value="ECO:0007669"/>
    <property type="project" value="TreeGrafter"/>
</dbReference>
<dbReference type="GO" id="GO:0006269">
    <property type="term" value="P:DNA replication, synthesis of primer"/>
    <property type="evidence" value="ECO:0007669"/>
    <property type="project" value="UniProtKB-UniRule"/>
</dbReference>
<dbReference type="CDD" id="cd06560">
    <property type="entry name" value="PriL"/>
    <property type="match status" value="1"/>
</dbReference>
<dbReference type="HAMAP" id="MF_00701">
    <property type="entry name" value="DNA_primase_lrg_arc"/>
    <property type="match status" value="1"/>
</dbReference>
<dbReference type="InterPro" id="IPR007238">
    <property type="entry name" value="DNA_primase_lsu_euk/arc"/>
</dbReference>
<dbReference type="InterPro" id="IPR023642">
    <property type="entry name" value="DNA_primase_lsu_PriL"/>
</dbReference>
<dbReference type="NCBIfam" id="NF002589">
    <property type="entry name" value="PRK02249.1-3"/>
    <property type="match status" value="1"/>
</dbReference>
<dbReference type="PANTHER" id="PTHR10537">
    <property type="entry name" value="DNA PRIMASE LARGE SUBUNIT"/>
    <property type="match status" value="1"/>
</dbReference>
<dbReference type="PANTHER" id="PTHR10537:SF3">
    <property type="entry name" value="DNA PRIMASE LARGE SUBUNIT"/>
    <property type="match status" value="1"/>
</dbReference>
<dbReference type="Pfam" id="PF04104">
    <property type="entry name" value="DNA_primase_lrg"/>
    <property type="match status" value="1"/>
</dbReference>
<dbReference type="SUPFAM" id="SSF140914">
    <property type="entry name" value="PriB N-terminal domain-like"/>
    <property type="match status" value="1"/>
</dbReference>
<feature type="chain" id="PRO_0000046789" description="DNA primase large subunit PriL">
    <location>
        <begin position="1"/>
        <end position="340"/>
    </location>
</feature>
<feature type="binding site" evidence="1">
    <location>
        <position position="229"/>
    </location>
    <ligand>
        <name>[4Fe-4S] cluster</name>
        <dbReference type="ChEBI" id="CHEBI:49883"/>
    </ligand>
</feature>
<feature type="binding site" evidence="1">
    <location>
        <position position="301"/>
    </location>
    <ligand>
        <name>[4Fe-4S] cluster</name>
        <dbReference type="ChEBI" id="CHEBI:49883"/>
    </ligand>
</feature>
<feature type="binding site" evidence="1">
    <location>
        <position position="310"/>
    </location>
    <ligand>
        <name>[4Fe-4S] cluster</name>
        <dbReference type="ChEBI" id="CHEBI:49883"/>
    </ligand>
</feature>
<feature type="binding site" evidence="1">
    <location>
        <position position="318"/>
    </location>
    <ligand>
        <name>[4Fe-4S] cluster</name>
        <dbReference type="ChEBI" id="CHEBI:49883"/>
    </ligand>
</feature>
<keyword id="KW-0004">4Fe-4S</keyword>
<keyword id="KW-0235">DNA replication</keyword>
<keyword id="KW-0408">Iron</keyword>
<keyword id="KW-0411">Iron-sulfur</keyword>
<keyword id="KW-0479">Metal-binding</keyword>
<keyword id="KW-0639">Primosome</keyword>
<keyword id="KW-1185">Reference proteome</keyword>
<protein>
    <recommendedName>
        <fullName evidence="1">DNA primase large subunit PriL</fullName>
    </recommendedName>
</protein>
<comment type="function">
    <text evidence="1">Regulatory subunit of DNA primase, an RNA polymerase that catalyzes the synthesis of short RNA molecules used as primers for DNA polymerase during DNA replication. Stabilizes and modulates the activity of the small subunit, increasing the rate of DNA synthesis, and conferring RNA synthesis capability. The DNA polymerase activity may enable DNA primase to also catalyze primer extension after primer synthesis. May also play a role in DNA repair.</text>
</comment>
<comment type="cofactor">
    <cofactor evidence="1">
        <name>[4Fe-4S] cluster</name>
        <dbReference type="ChEBI" id="CHEBI:49883"/>
    </cofactor>
    <text evidence="1">Binds 1 [4Fe-4S] cluster.</text>
</comment>
<comment type="subunit">
    <text evidence="1">Heterodimer of a small subunit (PriS) and a large subunit (PriL).</text>
</comment>
<comment type="similarity">
    <text evidence="1">Belongs to the eukaryotic-type primase large subunit family.</text>
</comment>
<proteinExistence type="inferred from homology"/>
<reference key="1">
    <citation type="journal article" date="2000" name="Nature">
        <title>The genome sequence of the thermoacidophilic scavenger Thermoplasma acidophilum.</title>
        <authorList>
            <person name="Ruepp A."/>
            <person name="Graml W."/>
            <person name="Santos-Martinez M.-L."/>
            <person name="Koretke K.K."/>
            <person name="Volker C."/>
            <person name="Mewes H.-W."/>
            <person name="Frishman D."/>
            <person name="Stocker S."/>
            <person name="Lupas A.N."/>
            <person name="Baumeister W."/>
        </authorList>
    </citation>
    <scope>NUCLEOTIDE SEQUENCE [LARGE SCALE GENOMIC DNA]</scope>
    <source>
        <strain>ATCC 25905 / DSM 1728 / JCM 9062 / NBRC 15155 / AMRC-C165</strain>
    </source>
</reference>
<evidence type="ECO:0000255" key="1">
    <source>
        <dbReference type="HAMAP-Rule" id="MF_00701"/>
    </source>
</evidence>
<organism>
    <name type="scientific">Thermoplasma acidophilum (strain ATCC 25905 / DSM 1728 / JCM 9062 / NBRC 15155 / AMRC-C165)</name>
    <dbReference type="NCBI Taxonomy" id="273075"/>
    <lineage>
        <taxon>Archaea</taxon>
        <taxon>Methanobacteriati</taxon>
        <taxon>Thermoplasmatota</taxon>
        <taxon>Thermoplasmata</taxon>
        <taxon>Thermoplasmatales</taxon>
        <taxon>Thermoplasmataceae</taxon>
        <taxon>Thermoplasma</taxon>
    </lineage>
</organism>
<sequence>MILPDRKQILDRELIRRIADTTISGSGHSDGLSEYASIRKAAFAFVESAVLGDQAYSPIENAELAFIVWILAALDENIITARTIIKARDTVEKQLRLVEHYEDLEEFGSRLGIEISVFGEQIGKDHLYRIGVADFATYASRVTGSKYRLSNQIVREGYVYVDEDVMAKVLREAFVSFMFDTLDQIRKEDAIETIKSVLDDLEKIRESYRKAHNVRMIAGKGDASMFPPCMKEIIKNLESGVNVSHMGRLALASFLHKAGYSEDEIVPYFRNAPDFDENITRYQIKHISGEISGTEYTPPKCETMRSNHLCYMDDDPLCHREWMKHPLTYYEVKRRNRKIR</sequence>
<gene>
    <name evidence="1" type="primary">priL</name>
    <name type="synonym">priB</name>
    <name type="ordered locus">Ta1038</name>
</gene>